<feature type="chain" id="PRO_0000368517" description="ATP synthase subunit b">
    <location>
        <begin position="1"/>
        <end position="156"/>
    </location>
</feature>
<feature type="transmembrane region" description="Helical" evidence="1">
    <location>
        <begin position="5"/>
        <end position="25"/>
    </location>
</feature>
<protein>
    <recommendedName>
        <fullName evidence="1">ATP synthase subunit b</fullName>
    </recommendedName>
    <alternativeName>
        <fullName evidence="1">ATP synthase F(0) sector subunit b</fullName>
    </alternativeName>
    <alternativeName>
        <fullName evidence="1">ATPase subunit I</fullName>
    </alternativeName>
    <alternativeName>
        <fullName evidence="1">F-type ATPase subunit b</fullName>
        <shortName evidence="1">F-ATPase subunit b</shortName>
    </alternativeName>
</protein>
<proteinExistence type="inferred from homology"/>
<gene>
    <name evidence="1" type="primary">atpF</name>
    <name type="ordered locus">HCH_07076</name>
</gene>
<organism>
    <name type="scientific">Hahella chejuensis (strain KCTC 2396)</name>
    <dbReference type="NCBI Taxonomy" id="349521"/>
    <lineage>
        <taxon>Bacteria</taxon>
        <taxon>Pseudomonadati</taxon>
        <taxon>Pseudomonadota</taxon>
        <taxon>Gammaproteobacteria</taxon>
        <taxon>Oceanospirillales</taxon>
        <taxon>Hahellaceae</taxon>
        <taxon>Hahella</taxon>
    </lineage>
</organism>
<reference key="1">
    <citation type="journal article" date="2005" name="Nucleic Acids Res.">
        <title>Genomic blueprint of Hahella chejuensis, a marine microbe producing an algicidal agent.</title>
        <authorList>
            <person name="Jeong H."/>
            <person name="Yim J.H."/>
            <person name="Lee C."/>
            <person name="Choi S.-H."/>
            <person name="Park Y.K."/>
            <person name="Yoon S.H."/>
            <person name="Hur C.-G."/>
            <person name="Kang H.-Y."/>
            <person name="Kim D."/>
            <person name="Lee H.H."/>
            <person name="Park K.H."/>
            <person name="Park S.-H."/>
            <person name="Park H.-S."/>
            <person name="Lee H.K."/>
            <person name="Oh T.K."/>
            <person name="Kim J.F."/>
        </authorList>
    </citation>
    <scope>NUCLEOTIDE SEQUENCE [LARGE SCALE GENOMIC DNA]</scope>
    <source>
        <strain>KCTC 2396</strain>
    </source>
</reference>
<name>ATPF_HAHCH</name>
<accession>Q2S6N7</accession>
<comment type="function">
    <text evidence="1">F(1)F(0) ATP synthase produces ATP from ADP in the presence of a proton or sodium gradient. F-type ATPases consist of two structural domains, F(1) containing the extramembraneous catalytic core and F(0) containing the membrane proton channel, linked together by a central stalk and a peripheral stalk. During catalysis, ATP synthesis in the catalytic domain of F(1) is coupled via a rotary mechanism of the central stalk subunits to proton translocation.</text>
</comment>
<comment type="function">
    <text evidence="1">Component of the F(0) channel, it forms part of the peripheral stalk, linking F(1) to F(0).</text>
</comment>
<comment type="subunit">
    <text evidence="1">F-type ATPases have 2 components, F(1) - the catalytic core - and F(0) - the membrane proton channel. F(1) has five subunits: alpha(3), beta(3), gamma(1), delta(1), epsilon(1). F(0) has three main subunits: a(1), b(2) and c(10-14). The alpha and beta chains form an alternating ring which encloses part of the gamma chain. F(1) is attached to F(0) by a central stalk formed by the gamma and epsilon chains, while a peripheral stalk is formed by the delta and b chains.</text>
</comment>
<comment type="subcellular location">
    <subcellularLocation>
        <location evidence="1">Cell inner membrane</location>
        <topology evidence="1">Single-pass membrane protein</topology>
    </subcellularLocation>
</comment>
<comment type="similarity">
    <text evidence="1">Belongs to the ATPase B chain family.</text>
</comment>
<evidence type="ECO:0000255" key="1">
    <source>
        <dbReference type="HAMAP-Rule" id="MF_01398"/>
    </source>
</evidence>
<sequence>MNINLTMIGQAIAFFIFVVFCMKYVWPPVIQALREREKKIADGLQAAEHAQKDLELAQEKVAKQLREAKQQAAEIIEQANKRANQMLEEAKDQARTEGERLITAAKAEIDQEKNRAKESLRAEVAALALAGAEKILETSVDAGAHSNMLDKLAAEL</sequence>
<dbReference type="EMBL" id="CP000155">
    <property type="protein sequence ID" value="ABC33687.1"/>
    <property type="molecule type" value="Genomic_DNA"/>
</dbReference>
<dbReference type="SMR" id="Q2S6N7"/>
<dbReference type="STRING" id="349521.HCH_07076"/>
<dbReference type="KEGG" id="hch:HCH_07076"/>
<dbReference type="eggNOG" id="COG0711">
    <property type="taxonomic scope" value="Bacteria"/>
</dbReference>
<dbReference type="HOGENOM" id="CLU_079215_4_5_6"/>
<dbReference type="Proteomes" id="UP000000238">
    <property type="component" value="Chromosome"/>
</dbReference>
<dbReference type="GO" id="GO:0005886">
    <property type="term" value="C:plasma membrane"/>
    <property type="evidence" value="ECO:0007669"/>
    <property type="project" value="UniProtKB-SubCell"/>
</dbReference>
<dbReference type="GO" id="GO:0045259">
    <property type="term" value="C:proton-transporting ATP synthase complex"/>
    <property type="evidence" value="ECO:0007669"/>
    <property type="project" value="UniProtKB-KW"/>
</dbReference>
<dbReference type="GO" id="GO:0046933">
    <property type="term" value="F:proton-transporting ATP synthase activity, rotational mechanism"/>
    <property type="evidence" value="ECO:0007669"/>
    <property type="project" value="UniProtKB-UniRule"/>
</dbReference>
<dbReference type="GO" id="GO:0046961">
    <property type="term" value="F:proton-transporting ATPase activity, rotational mechanism"/>
    <property type="evidence" value="ECO:0007669"/>
    <property type="project" value="TreeGrafter"/>
</dbReference>
<dbReference type="CDD" id="cd06503">
    <property type="entry name" value="ATP-synt_Fo_b"/>
    <property type="match status" value="1"/>
</dbReference>
<dbReference type="FunFam" id="1.20.5.620:FF:000001">
    <property type="entry name" value="ATP synthase subunit b"/>
    <property type="match status" value="1"/>
</dbReference>
<dbReference type="Gene3D" id="1.20.5.620">
    <property type="entry name" value="F1F0 ATP synthase subunit B, membrane domain"/>
    <property type="match status" value="1"/>
</dbReference>
<dbReference type="HAMAP" id="MF_01398">
    <property type="entry name" value="ATP_synth_b_bprime"/>
    <property type="match status" value="1"/>
</dbReference>
<dbReference type="InterPro" id="IPR028987">
    <property type="entry name" value="ATP_synth_B-like_membr_sf"/>
</dbReference>
<dbReference type="InterPro" id="IPR002146">
    <property type="entry name" value="ATP_synth_b/b'su_bac/chlpt"/>
</dbReference>
<dbReference type="InterPro" id="IPR005864">
    <property type="entry name" value="ATP_synth_F0_bsu_bac"/>
</dbReference>
<dbReference type="InterPro" id="IPR050059">
    <property type="entry name" value="ATP_synthase_B_chain"/>
</dbReference>
<dbReference type="NCBIfam" id="TIGR01144">
    <property type="entry name" value="ATP_synt_b"/>
    <property type="match status" value="1"/>
</dbReference>
<dbReference type="NCBIfam" id="NF004411">
    <property type="entry name" value="PRK05759.1-2"/>
    <property type="match status" value="1"/>
</dbReference>
<dbReference type="NCBIfam" id="NF004413">
    <property type="entry name" value="PRK05759.1-4"/>
    <property type="match status" value="1"/>
</dbReference>
<dbReference type="PANTHER" id="PTHR33445:SF1">
    <property type="entry name" value="ATP SYNTHASE SUBUNIT B"/>
    <property type="match status" value="1"/>
</dbReference>
<dbReference type="PANTHER" id="PTHR33445">
    <property type="entry name" value="ATP SYNTHASE SUBUNIT B', CHLOROPLASTIC"/>
    <property type="match status" value="1"/>
</dbReference>
<dbReference type="Pfam" id="PF00430">
    <property type="entry name" value="ATP-synt_B"/>
    <property type="match status" value="1"/>
</dbReference>
<dbReference type="SUPFAM" id="SSF81573">
    <property type="entry name" value="F1F0 ATP synthase subunit B, membrane domain"/>
    <property type="match status" value="1"/>
</dbReference>
<keyword id="KW-0066">ATP synthesis</keyword>
<keyword id="KW-0997">Cell inner membrane</keyword>
<keyword id="KW-1003">Cell membrane</keyword>
<keyword id="KW-0138">CF(0)</keyword>
<keyword id="KW-0375">Hydrogen ion transport</keyword>
<keyword id="KW-0406">Ion transport</keyword>
<keyword id="KW-0472">Membrane</keyword>
<keyword id="KW-1185">Reference proteome</keyword>
<keyword id="KW-0812">Transmembrane</keyword>
<keyword id="KW-1133">Transmembrane helix</keyword>
<keyword id="KW-0813">Transport</keyword>